<accession>O88018</accession>
<feature type="chain" id="PRO_0000173641" description="Transaldolase 1">
    <location>
        <begin position="1"/>
        <end position="381"/>
    </location>
</feature>
<feature type="active site" description="Schiff-base intermediate with substrate" evidence="1">
    <location>
        <position position="149"/>
    </location>
</feature>
<proteinExistence type="inferred from homology"/>
<gene>
    <name type="primary">tal1</name>
    <name type="synonym">tal</name>
    <name type="ordered locus">SCO6662</name>
    <name type="ORF">SC5A7.12c</name>
</gene>
<reference key="1">
    <citation type="journal article" date="2002" name="Nature">
        <title>Complete genome sequence of the model actinomycete Streptomyces coelicolor A3(2).</title>
        <authorList>
            <person name="Bentley S.D."/>
            <person name="Chater K.F."/>
            <person name="Cerdeno-Tarraga A.-M."/>
            <person name="Challis G.L."/>
            <person name="Thomson N.R."/>
            <person name="James K.D."/>
            <person name="Harris D.E."/>
            <person name="Quail M.A."/>
            <person name="Kieser H."/>
            <person name="Harper D."/>
            <person name="Bateman A."/>
            <person name="Brown S."/>
            <person name="Chandra G."/>
            <person name="Chen C.W."/>
            <person name="Collins M."/>
            <person name="Cronin A."/>
            <person name="Fraser A."/>
            <person name="Goble A."/>
            <person name="Hidalgo J."/>
            <person name="Hornsby T."/>
            <person name="Howarth S."/>
            <person name="Huang C.-H."/>
            <person name="Kieser T."/>
            <person name="Larke L."/>
            <person name="Murphy L.D."/>
            <person name="Oliver K."/>
            <person name="O'Neil S."/>
            <person name="Rabbinowitsch E."/>
            <person name="Rajandream M.A."/>
            <person name="Rutherford K.M."/>
            <person name="Rutter S."/>
            <person name="Seeger K."/>
            <person name="Saunders D."/>
            <person name="Sharp S."/>
            <person name="Squares R."/>
            <person name="Squares S."/>
            <person name="Taylor K."/>
            <person name="Warren T."/>
            <person name="Wietzorrek A."/>
            <person name="Woodward J.R."/>
            <person name="Barrell B.G."/>
            <person name="Parkhill J."/>
            <person name="Hopwood D.A."/>
        </authorList>
    </citation>
    <scope>NUCLEOTIDE SEQUENCE [LARGE SCALE GENOMIC DNA]</scope>
    <source>
        <strain>ATCC BAA-471 / A3(2) / M145</strain>
    </source>
</reference>
<sequence length="381" mass="40407">MITVTEATATAGALQRLADQGVSVWLDDLSRRRIESGNLAELIRTKNVVGVTTNPSIFQAAIGSGEGYEEQLADLATRGVTVDEAVRMMTTADVRAAADVLRGVYDASGGRDGRVSIEVDPRLAHDTAATVAEARQLSWLVDRPNVMIKIPATKAGLPAITEVIGAGISVNVTLIFSLERYREVMDAYLAGLEKAQAAGIDLAGIHSVASFFVSRVDSEIDKRLSLLGTEEALGLRGRAALANARLAYEAYENVFAGDRFTALAGARANAQRPLWASTGVKDPAFRDTLYVEELVAPGTVNTMPEATLDAAADHGDVRGDTVTGGYAQARADLAAVERLGVSYDEVVEQLEQEGVAKFEAAWQELLAAVTKSLDSKGVDGE</sequence>
<dbReference type="EC" id="2.2.1.2"/>
<dbReference type="EMBL" id="AL939128">
    <property type="protein sequence ID" value="CAA19941.1"/>
    <property type="molecule type" value="Genomic_DNA"/>
</dbReference>
<dbReference type="PIR" id="T35161">
    <property type="entry name" value="T35161"/>
</dbReference>
<dbReference type="RefSeq" id="NP_630737.1">
    <property type="nucleotide sequence ID" value="NC_003888.3"/>
</dbReference>
<dbReference type="RefSeq" id="WP_011031085.1">
    <property type="nucleotide sequence ID" value="NZ_VNID01000002.1"/>
</dbReference>
<dbReference type="SMR" id="O88018"/>
<dbReference type="FunCoup" id="O88018">
    <property type="interactions" value="210"/>
</dbReference>
<dbReference type="STRING" id="100226.gene:17764320"/>
<dbReference type="PaxDb" id="100226-SCO6662"/>
<dbReference type="KEGG" id="sco:SCO6662"/>
<dbReference type="PATRIC" id="fig|100226.15.peg.6768"/>
<dbReference type="eggNOG" id="COG0176">
    <property type="taxonomic scope" value="Bacteria"/>
</dbReference>
<dbReference type="HOGENOM" id="CLU_050771_1_0_11"/>
<dbReference type="InParanoid" id="O88018"/>
<dbReference type="OrthoDB" id="9809101at2"/>
<dbReference type="PhylomeDB" id="O88018"/>
<dbReference type="UniPathway" id="UPA00115">
    <property type="reaction ID" value="UER00414"/>
</dbReference>
<dbReference type="Proteomes" id="UP000001973">
    <property type="component" value="Chromosome"/>
</dbReference>
<dbReference type="GO" id="GO:0005737">
    <property type="term" value="C:cytoplasm"/>
    <property type="evidence" value="ECO:0007669"/>
    <property type="project" value="UniProtKB-SubCell"/>
</dbReference>
<dbReference type="GO" id="GO:0004801">
    <property type="term" value="F:transaldolase activity"/>
    <property type="evidence" value="ECO:0007669"/>
    <property type="project" value="UniProtKB-UniRule"/>
</dbReference>
<dbReference type="GO" id="GO:0005975">
    <property type="term" value="P:carbohydrate metabolic process"/>
    <property type="evidence" value="ECO:0007669"/>
    <property type="project" value="InterPro"/>
</dbReference>
<dbReference type="GO" id="GO:0006098">
    <property type="term" value="P:pentose-phosphate shunt"/>
    <property type="evidence" value="ECO:0007669"/>
    <property type="project" value="UniProtKB-UniRule"/>
</dbReference>
<dbReference type="CDD" id="cd00955">
    <property type="entry name" value="Transaldolase_like"/>
    <property type="match status" value="1"/>
</dbReference>
<dbReference type="Gene3D" id="3.20.20.70">
    <property type="entry name" value="Aldolase class I"/>
    <property type="match status" value="1"/>
</dbReference>
<dbReference type="HAMAP" id="MF_00493">
    <property type="entry name" value="Transaldolase_2"/>
    <property type="match status" value="1"/>
</dbReference>
<dbReference type="InterPro" id="IPR013785">
    <property type="entry name" value="Aldolase_TIM"/>
</dbReference>
<dbReference type="InterPro" id="IPR001585">
    <property type="entry name" value="TAL/FSA"/>
</dbReference>
<dbReference type="InterPro" id="IPR004732">
    <property type="entry name" value="Transaldolase_2"/>
</dbReference>
<dbReference type="InterPro" id="IPR018225">
    <property type="entry name" value="Transaldolase_AS"/>
</dbReference>
<dbReference type="NCBIfam" id="NF002881">
    <property type="entry name" value="PRK03343.1"/>
    <property type="match status" value="1"/>
</dbReference>
<dbReference type="NCBIfam" id="TIGR00876">
    <property type="entry name" value="tal_mycobact"/>
    <property type="match status" value="1"/>
</dbReference>
<dbReference type="PANTHER" id="PTHR10683">
    <property type="entry name" value="TRANSALDOLASE"/>
    <property type="match status" value="1"/>
</dbReference>
<dbReference type="PANTHER" id="PTHR10683:SF31">
    <property type="entry name" value="TRANSALDOLASE"/>
    <property type="match status" value="1"/>
</dbReference>
<dbReference type="Pfam" id="PF00923">
    <property type="entry name" value="TAL_FSA"/>
    <property type="match status" value="1"/>
</dbReference>
<dbReference type="PIRSF" id="PIRSF036915">
    <property type="entry name" value="Trnald_Bac_Plnt"/>
    <property type="match status" value="1"/>
</dbReference>
<dbReference type="SUPFAM" id="SSF51569">
    <property type="entry name" value="Aldolase"/>
    <property type="match status" value="1"/>
</dbReference>
<dbReference type="PROSITE" id="PS01054">
    <property type="entry name" value="TRANSALDOLASE_1"/>
    <property type="match status" value="1"/>
</dbReference>
<dbReference type="PROSITE" id="PS00958">
    <property type="entry name" value="TRANSALDOLASE_2"/>
    <property type="match status" value="1"/>
</dbReference>
<evidence type="ECO:0000250" key="1"/>
<evidence type="ECO:0000305" key="2"/>
<keyword id="KW-0963">Cytoplasm</keyword>
<keyword id="KW-0570">Pentose shunt</keyword>
<keyword id="KW-1185">Reference proteome</keyword>
<keyword id="KW-0704">Schiff base</keyword>
<keyword id="KW-0808">Transferase</keyword>
<name>TAL1_STRCO</name>
<protein>
    <recommendedName>
        <fullName>Transaldolase 1</fullName>
        <ecNumber>2.2.1.2</ecNumber>
    </recommendedName>
</protein>
<comment type="function">
    <text evidence="1">Transaldolase is important for the balance of metabolites in the pentose-phosphate pathway.</text>
</comment>
<comment type="catalytic activity">
    <reaction>
        <text>D-sedoheptulose 7-phosphate + D-glyceraldehyde 3-phosphate = D-erythrose 4-phosphate + beta-D-fructose 6-phosphate</text>
        <dbReference type="Rhea" id="RHEA:17053"/>
        <dbReference type="ChEBI" id="CHEBI:16897"/>
        <dbReference type="ChEBI" id="CHEBI:57483"/>
        <dbReference type="ChEBI" id="CHEBI:57634"/>
        <dbReference type="ChEBI" id="CHEBI:59776"/>
        <dbReference type="EC" id="2.2.1.2"/>
    </reaction>
</comment>
<comment type="pathway">
    <text>Carbohydrate degradation; pentose phosphate pathway; D-glyceraldehyde 3-phosphate and beta-D-fructose 6-phosphate from D-ribose 5-phosphate and D-xylulose 5-phosphate (non-oxidative stage): step 2/3.</text>
</comment>
<comment type="subcellular location">
    <subcellularLocation>
        <location evidence="1">Cytoplasm</location>
    </subcellularLocation>
</comment>
<comment type="similarity">
    <text evidence="2">Belongs to the transaldolase family. Type 2 subfamily.</text>
</comment>
<organism>
    <name type="scientific">Streptomyces coelicolor (strain ATCC BAA-471 / A3(2) / M145)</name>
    <dbReference type="NCBI Taxonomy" id="100226"/>
    <lineage>
        <taxon>Bacteria</taxon>
        <taxon>Bacillati</taxon>
        <taxon>Actinomycetota</taxon>
        <taxon>Actinomycetes</taxon>
        <taxon>Kitasatosporales</taxon>
        <taxon>Streptomycetaceae</taxon>
        <taxon>Streptomyces</taxon>
        <taxon>Streptomyces albidoflavus group</taxon>
    </lineage>
</organism>